<feature type="chain" id="PRO_0000175780" description="Probable transcriptional regulatory protein CJE1306">
    <location>
        <begin position="1"/>
        <end position="235"/>
    </location>
</feature>
<dbReference type="EMBL" id="CP000025">
    <property type="protein sequence ID" value="AAW35627.1"/>
    <property type="molecule type" value="Genomic_DNA"/>
</dbReference>
<dbReference type="RefSeq" id="WP_002780603.1">
    <property type="nucleotide sequence ID" value="NC_003912.7"/>
</dbReference>
<dbReference type="SMR" id="Q5HTU2"/>
<dbReference type="KEGG" id="cjr:CJE1306"/>
<dbReference type="HOGENOM" id="CLU_062974_2_2_7"/>
<dbReference type="GO" id="GO:0005829">
    <property type="term" value="C:cytosol"/>
    <property type="evidence" value="ECO:0007669"/>
    <property type="project" value="TreeGrafter"/>
</dbReference>
<dbReference type="GO" id="GO:0003677">
    <property type="term" value="F:DNA binding"/>
    <property type="evidence" value="ECO:0007669"/>
    <property type="project" value="UniProtKB-UniRule"/>
</dbReference>
<dbReference type="GO" id="GO:0006355">
    <property type="term" value="P:regulation of DNA-templated transcription"/>
    <property type="evidence" value="ECO:0007669"/>
    <property type="project" value="UniProtKB-UniRule"/>
</dbReference>
<dbReference type="FunFam" id="1.10.10.200:FF:000004">
    <property type="entry name" value="Probable transcriptional regulatory protein BSBG_02618"/>
    <property type="match status" value="1"/>
</dbReference>
<dbReference type="Gene3D" id="1.10.10.200">
    <property type="match status" value="1"/>
</dbReference>
<dbReference type="Gene3D" id="3.30.70.980">
    <property type="match status" value="2"/>
</dbReference>
<dbReference type="HAMAP" id="MF_00693">
    <property type="entry name" value="Transcrip_reg_TACO1"/>
    <property type="match status" value="1"/>
</dbReference>
<dbReference type="InterPro" id="IPR017856">
    <property type="entry name" value="Integrase-like_N"/>
</dbReference>
<dbReference type="InterPro" id="IPR048300">
    <property type="entry name" value="TACO1_YebC-like_2nd/3rd_dom"/>
</dbReference>
<dbReference type="InterPro" id="IPR049083">
    <property type="entry name" value="TACO1_YebC_N"/>
</dbReference>
<dbReference type="InterPro" id="IPR002876">
    <property type="entry name" value="Transcrip_reg_TACO1-like"/>
</dbReference>
<dbReference type="InterPro" id="IPR026564">
    <property type="entry name" value="Transcrip_reg_TACO1-like_dom3"/>
</dbReference>
<dbReference type="InterPro" id="IPR029072">
    <property type="entry name" value="YebC-like"/>
</dbReference>
<dbReference type="NCBIfam" id="NF009044">
    <property type="entry name" value="PRK12378.1"/>
    <property type="match status" value="1"/>
</dbReference>
<dbReference type="NCBIfam" id="TIGR01033">
    <property type="entry name" value="YebC/PmpR family DNA-binding transcriptional regulator"/>
    <property type="match status" value="1"/>
</dbReference>
<dbReference type="PANTHER" id="PTHR12532:SF6">
    <property type="entry name" value="TRANSCRIPTIONAL REGULATORY PROTEIN YEBC-RELATED"/>
    <property type="match status" value="1"/>
</dbReference>
<dbReference type="PANTHER" id="PTHR12532">
    <property type="entry name" value="TRANSLATIONAL ACTIVATOR OF CYTOCHROME C OXIDASE 1"/>
    <property type="match status" value="1"/>
</dbReference>
<dbReference type="Pfam" id="PF20772">
    <property type="entry name" value="TACO1_YebC_N"/>
    <property type="match status" value="1"/>
</dbReference>
<dbReference type="Pfam" id="PF01709">
    <property type="entry name" value="Transcrip_reg"/>
    <property type="match status" value="1"/>
</dbReference>
<dbReference type="SUPFAM" id="SSF75625">
    <property type="entry name" value="YebC-like"/>
    <property type="match status" value="1"/>
</dbReference>
<organism>
    <name type="scientific">Campylobacter jejuni (strain RM1221)</name>
    <dbReference type="NCBI Taxonomy" id="195099"/>
    <lineage>
        <taxon>Bacteria</taxon>
        <taxon>Pseudomonadati</taxon>
        <taxon>Campylobacterota</taxon>
        <taxon>Epsilonproteobacteria</taxon>
        <taxon>Campylobacterales</taxon>
        <taxon>Campylobacteraceae</taxon>
        <taxon>Campylobacter</taxon>
    </lineage>
</organism>
<sequence>MGRAFEYRRASKEARWDKMSKLFPKLAKAIQVAAKEGGTDPDMNPKLRSAIATAKANNMPKDNIDAAIKRASGKDSADIKNIHYEGKAAHGALVIVECMSDNPTRTVANVKAIFSKNGGEVLQNGSLGFMFTRKAVFHLEKFAGDLEELELDLIDAGLEELEQNEEELVISGDYTAFGELSSAIEAKGLVLKKAGLEYIPNNPVSFSEEQLSDIEKLLDKLEDDDDVQAVYTNID</sequence>
<protein>
    <recommendedName>
        <fullName evidence="1">Probable transcriptional regulatory protein CJE1306</fullName>
    </recommendedName>
</protein>
<evidence type="ECO:0000255" key="1">
    <source>
        <dbReference type="HAMAP-Rule" id="MF_00693"/>
    </source>
</evidence>
<name>Y1306_CAMJR</name>
<accession>Q5HTU2</accession>
<proteinExistence type="inferred from homology"/>
<gene>
    <name type="ordered locus">CJE1306</name>
</gene>
<comment type="subcellular location">
    <subcellularLocation>
        <location evidence="1">Cytoplasm</location>
    </subcellularLocation>
</comment>
<comment type="similarity">
    <text evidence="1">Belongs to the TACO1 family.</text>
</comment>
<keyword id="KW-0963">Cytoplasm</keyword>
<keyword id="KW-0238">DNA-binding</keyword>
<keyword id="KW-0804">Transcription</keyword>
<keyword id="KW-0805">Transcription regulation</keyword>
<reference key="1">
    <citation type="journal article" date="2005" name="PLoS Biol.">
        <title>Major structural differences and novel potential virulence mechanisms from the genomes of multiple Campylobacter species.</title>
        <authorList>
            <person name="Fouts D.E."/>
            <person name="Mongodin E.F."/>
            <person name="Mandrell R.E."/>
            <person name="Miller W.G."/>
            <person name="Rasko D.A."/>
            <person name="Ravel J."/>
            <person name="Brinkac L.M."/>
            <person name="DeBoy R.T."/>
            <person name="Parker C.T."/>
            <person name="Daugherty S.C."/>
            <person name="Dodson R.J."/>
            <person name="Durkin A.S."/>
            <person name="Madupu R."/>
            <person name="Sullivan S.A."/>
            <person name="Shetty J.U."/>
            <person name="Ayodeji M.A."/>
            <person name="Shvartsbeyn A."/>
            <person name="Schatz M.C."/>
            <person name="Badger J.H."/>
            <person name="Fraser C.M."/>
            <person name="Nelson K.E."/>
        </authorList>
    </citation>
    <scope>NUCLEOTIDE SEQUENCE [LARGE SCALE GENOMIC DNA]</scope>
    <source>
        <strain>RM1221</strain>
    </source>
</reference>